<gene>
    <name evidence="5" type="primary">RPA1</name>
    <name evidence="7" type="ORF">TTHERM_00106890</name>
</gene>
<protein>
    <recommendedName>
        <fullName evidence="6">Replication protein A 70 kDa DNA-binding subunit</fullName>
        <shortName evidence="6">RP-A p70</shortName>
    </recommendedName>
    <alternativeName>
        <fullName evidence="6">Replication factor A protein 1</fullName>
        <shortName evidence="6">RF-A protein 1</shortName>
    </alternativeName>
</protein>
<organism>
    <name type="scientific">Tetrahymena thermophila (strain SB210)</name>
    <dbReference type="NCBI Taxonomy" id="312017"/>
    <lineage>
        <taxon>Eukaryota</taxon>
        <taxon>Sar</taxon>
        <taxon>Alveolata</taxon>
        <taxon>Ciliophora</taxon>
        <taxon>Intramacronucleata</taxon>
        <taxon>Oligohymenophorea</taxon>
        <taxon>Hymenostomatida</taxon>
        <taxon>Tetrahymenina</taxon>
        <taxon>Tetrahymenidae</taxon>
        <taxon>Tetrahymena</taxon>
    </lineage>
</organism>
<feature type="chain" id="PRO_0000449912" description="Replication protein A 70 kDa DNA-binding subunit">
    <location>
        <begin position="1"/>
        <end position="671"/>
    </location>
</feature>
<feature type="DNA-binding region" description="OB" evidence="2">
    <location>
        <begin position="240"/>
        <end position="322"/>
    </location>
</feature>
<feature type="zinc finger region" description="C4-type" evidence="2">
    <location>
        <begin position="530"/>
        <end position="549"/>
    </location>
</feature>
<feature type="region of interest" description="Disordered" evidence="3">
    <location>
        <begin position="143"/>
        <end position="166"/>
    </location>
</feature>
<feature type="region of interest" description="Disordered" evidence="3">
    <location>
        <begin position="190"/>
        <end position="219"/>
    </location>
</feature>
<feature type="compositionally biased region" description="Low complexity" evidence="3">
    <location>
        <begin position="199"/>
        <end position="213"/>
    </location>
</feature>
<evidence type="ECO:0000250" key="1">
    <source>
        <dbReference type="UniProtKB" id="P27694"/>
    </source>
</evidence>
<evidence type="ECO:0000255" key="2"/>
<evidence type="ECO:0000256" key="3">
    <source>
        <dbReference type="SAM" id="MobiDB-lite"/>
    </source>
</evidence>
<evidence type="ECO:0000269" key="4">
    <source>
    </source>
</evidence>
<evidence type="ECO:0000303" key="5">
    <source>
    </source>
</evidence>
<evidence type="ECO:0000305" key="6"/>
<evidence type="ECO:0000312" key="7">
    <source>
        <dbReference type="EMBL" id="EAR92088.3"/>
    </source>
</evidence>
<name>RFA1_TETTS</name>
<reference key="1">
    <citation type="journal article" date="2009" name="Mol. Cell">
        <title>An RPA-related sequence-specific DNA-binding subunit of telomerase holoenzyme is required for elongation processivity and telomere maintenance.</title>
        <authorList>
            <person name="Min B."/>
            <person name="Collins K."/>
        </authorList>
    </citation>
    <scope>NUCLEOTIDE SEQUENCE [MRNA]</scope>
</reference>
<reference key="2">
    <citation type="journal article" date="2006" name="PLoS Biol.">
        <title>Macronuclear genome sequence of the ciliate Tetrahymena thermophila, a model eukaryote.</title>
        <authorList>
            <person name="Eisen J.A."/>
            <person name="Coyne R.S."/>
            <person name="Wu M."/>
            <person name="Wu D."/>
            <person name="Thiagarajan M."/>
            <person name="Wortman J.R."/>
            <person name="Badger J.H."/>
            <person name="Ren Q."/>
            <person name="Amedeo P."/>
            <person name="Jones K.M."/>
            <person name="Tallon L.J."/>
            <person name="Delcher A.L."/>
            <person name="Salzberg S.L."/>
            <person name="Silva J.C."/>
            <person name="Haas B.J."/>
            <person name="Majoros W.H."/>
            <person name="Farzad M."/>
            <person name="Carlton J.M."/>
            <person name="Smith R.K. Jr."/>
            <person name="Garg J."/>
            <person name="Pearlman R.E."/>
            <person name="Karrer K.M."/>
            <person name="Sun L."/>
            <person name="Manning G."/>
            <person name="Elde N.C."/>
            <person name="Turkewitz A.P."/>
            <person name="Asai D.J."/>
            <person name="Wilkes D.E."/>
            <person name="Wang Y."/>
            <person name="Cai H."/>
            <person name="Collins K."/>
            <person name="Stewart B.A."/>
            <person name="Lee S.R."/>
            <person name="Wilamowska K."/>
            <person name="Weinberg Z."/>
            <person name="Ruzzo W.L."/>
            <person name="Wloga D."/>
            <person name="Gaertig J."/>
            <person name="Frankel J."/>
            <person name="Tsao C.-C."/>
            <person name="Gorovsky M.A."/>
            <person name="Keeling P.J."/>
            <person name="Waller R.F."/>
            <person name="Patron N.J."/>
            <person name="Cherry J.M."/>
            <person name="Stover N.A."/>
            <person name="Krieger C.J."/>
            <person name="del Toro C."/>
            <person name="Ryder H.F."/>
            <person name="Williamson S.C."/>
            <person name="Barbeau R.A."/>
            <person name="Hamilton E.P."/>
            <person name="Orias E."/>
        </authorList>
    </citation>
    <scope>NUCLEOTIDE SEQUENCE [LARGE SCALE GENOMIC DNA]</scope>
    <source>
        <strain>SB210</strain>
    </source>
</reference>
<reference key="3">
    <citation type="journal article" date="2017" name="J. Biol. Chem.">
        <title>Shared subunits of Tetrahymena telomerase holoenzyme and replication protein A have different functions in different cellular complexes.</title>
        <authorList>
            <person name="Upton H.E."/>
            <person name="Chan H."/>
            <person name="Feigon J."/>
            <person name="Collins K."/>
        </authorList>
    </citation>
    <scope>IDENTIFICATION IN THE RPA COMPLEX</scope>
</reference>
<accession>D8UYN9</accession>
<accession>Q234B5</accession>
<sequence length="671" mass="76806">MVTQLTKNAIDSLINSTNPDEQYVIQVLKAPQSVAENLFKICISDGFCKFKKGYFVSDAATKCQDLKDLCIIKCKKYIDDSNHDKERIIISNYELIYSNIQEQIGKPIEYKQYKSSGFSNPEGSTVIPSQYLSRNAQILQQNQVSQPKQMVTPPVSNINKPTPAVNNTFAQKPAVTNQNIQRVNQNPQQMNKTAPVKQNNNNNNNNNGNNKNNSSLQISTDGDEQNLEYIRNLQPNGQPQTIKVRITKKGDLKSFKEKQGKLFSIDVIDKFGDECSISFFNEIAEQYDGLFKVGQVIVLKQFSVKVNNNHQYNKGDHTVTVNKESKILICQEDPSIPMIKLNRQFIQDMQNKQKGDLIDLIVVVKADTEVKTMILKKDNQQQSKRDIISFDESLIETEITLWGETAKDYDAKQGDIIVFKDAKIGEFKDKKQINIGYGTQIFMNPDEQLFPQIHDVKKWYLSLNSDQLSTIQKAQGNDTGPREVTSFESSLNILKEEIKNLQTDPEMKIWKEIRGQIMYIKDTPLYYNACFSCKKKIARNNEVWTCINCNKDFNEPDSRYILSLNISDSTDTIWVSAFDEVGQKILGVKGDVFRYADEDTEHGTETKKKLLMAAQNKEYRFLLLTKQERDQNGNARDKTVIHAIKDFQPAYEAKKIINSLEKFMVIEENNP</sequence>
<keyword id="KW-0238">DNA-binding</keyword>
<keyword id="KW-0479">Metal-binding</keyword>
<keyword id="KW-1185">Reference proteome</keyword>
<keyword id="KW-0862">Zinc</keyword>
<keyword id="KW-0863">Zinc-finger</keyword>
<proteinExistence type="evidence at protein level"/>
<dbReference type="EMBL" id="GQ274003">
    <property type="protein sequence ID" value="ADB03555.2"/>
    <property type="molecule type" value="mRNA"/>
</dbReference>
<dbReference type="EMBL" id="GG662767">
    <property type="protein sequence ID" value="EAR92088.3"/>
    <property type="status" value="ALT_SEQ"/>
    <property type="molecule type" value="Genomic_DNA"/>
</dbReference>
<dbReference type="RefSeq" id="XP_001012333.3">
    <property type="nucleotide sequence ID" value="XM_001012333.3"/>
</dbReference>
<dbReference type="SMR" id="D8UYN9"/>
<dbReference type="FunCoup" id="D8UYN9">
    <property type="interactions" value="597"/>
</dbReference>
<dbReference type="STRING" id="312017.Q234B5"/>
<dbReference type="EnsemblProtists" id="EAR92088">
    <property type="protein sequence ID" value="EAR92088"/>
    <property type="gene ID" value="TTHERM_00106890"/>
</dbReference>
<dbReference type="GeneID" id="7846583"/>
<dbReference type="KEGG" id="tet:TTHERM_00106890"/>
<dbReference type="eggNOG" id="KOG0851">
    <property type="taxonomic scope" value="Eukaryota"/>
</dbReference>
<dbReference type="HOGENOM" id="CLU_409686_0_0_1"/>
<dbReference type="InParanoid" id="D8UYN9"/>
<dbReference type="OMA" id="WINCHIS"/>
<dbReference type="OrthoDB" id="300060at2759"/>
<dbReference type="Proteomes" id="UP000009168">
    <property type="component" value="Unassembled WGS sequence"/>
</dbReference>
<dbReference type="GO" id="GO:0005662">
    <property type="term" value="C:DNA replication factor A complex"/>
    <property type="evidence" value="ECO:0000314"/>
    <property type="project" value="UniProtKB"/>
</dbReference>
<dbReference type="GO" id="GO:0003677">
    <property type="term" value="F:DNA binding"/>
    <property type="evidence" value="ECO:0007669"/>
    <property type="project" value="UniProtKB-KW"/>
</dbReference>
<dbReference type="GO" id="GO:0008270">
    <property type="term" value="F:zinc ion binding"/>
    <property type="evidence" value="ECO:0007669"/>
    <property type="project" value="UniProtKB-KW"/>
</dbReference>
<dbReference type="CDD" id="cd04474">
    <property type="entry name" value="RPA1_DBD_A"/>
    <property type="match status" value="1"/>
</dbReference>
<dbReference type="CDD" id="cd04475">
    <property type="entry name" value="RPA1_DBD_B"/>
    <property type="match status" value="1"/>
</dbReference>
<dbReference type="CDD" id="cd04476">
    <property type="entry name" value="RPA1_DBD_C"/>
    <property type="match status" value="1"/>
</dbReference>
<dbReference type="FunFam" id="2.40.50.140:FF:000041">
    <property type="entry name" value="Replication protein A subunit"/>
    <property type="match status" value="1"/>
</dbReference>
<dbReference type="Gene3D" id="2.40.50.140">
    <property type="entry name" value="Nucleic acid-binding proteins"/>
    <property type="match status" value="4"/>
</dbReference>
<dbReference type="InterPro" id="IPR047192">
    <property type="entry name" value="Euk_RPA1_DBD_C"/>
</dbReference>
<dbReference type="InterPro" id="IPR012340">
    <property type="entry name" value="NA-bd_OB-fold"/>
</dbReference>
<dbReference type="InterPro" id="IPR013955">
    <property type="entry name" value="Rep_factor-A_C"/>
</dbReference>
<dbReference type="InterPro" id="IPR031657">
    <property type="entry name" value="REPA_OB_2"/>
</dbReference>
<dbReference type="PANTHER" id="PTHR47165">
    <property type="entry name" value="OS03G0429900 PROTEIN"/>
    <property type="match status" value="1"/>
</dbReference>
<dbReference type="PANTHER" id="PTHR47165:SF4">
    <property type="entry name" value="OS03G0429900 PROTEIN"/>
    <property type="match status" value="1"/>
</dbReference>
<dbReference type="Pfam" id="PF08646">
    <property type="entry name" value="Rep_fac-A_C"/>
    <property type="match status" value="1"/>
</dbReference>
<dbReference type="Pfam" id="PF16900">
    <property type="entry name" value="REPA_OB_2"/>
    <property type="match status" value="1"/>
</dbReference>
<dbReference type="SUPFAM" id="SSF50249">
    <property type="entry name" value="Nucleic acid-binding proteins"/>
    <property type="match status" value="4"/>
</dbReference>
<comment type="function">
    <text evidence="1">As part of the heterotrimeric replication protein A (RPA) complex, binds and stabilizes single-stranded DNA intermediates, that form during DNA replication or upon DNA stress (By similarity). It prevents their reannealing and in parallel, recruits and activates different proteins and complexes involved in DNA metabolism (By similarity). Thereby, it plays an essential role both in DNA replication and the cellular response to DNA damage (By similarity). In the cellular response to DNA damage, the RPA complex controls DNA repair and DNA damage checkpoint activation (By similarity).</text>
</comment>
<comment type="subunit">
    <text evidence="4">Component of the replication protein A complex (RPA), a heterotrimeric complex composed of RPA1, RPA2/TEB2 and RPA3/TEB3.</text>
</comment>
<comment type="similarity">
    <text evidence="6">Belongs to the replication factor A protein 1 family.</text>
</comment>
<comment type="sequence caution" evidence="6">
    <conflict type="erroneous gene model prediction">
        <sequence resource="EMBL-CDS" id="EAR92088"/>
    </conflict>
</comment>